<keyword id="KW-0274">FAD</keyword>
<keyword id="KW-0285">Flavoprotein</keyword>
<keyword id="KW-0472">Membrane</keyword>
<keyword id="KW-0496">Mitochondrion</keyword>
<keyword id="KW-0560">Oxidoreductase</keyword>
<keyword id="KW-1185">Reference proteome</keyword>
<reference key="1">
    <citation type="journal article" date="2003" name="Nature">
        <title>The genome sequence of the filamentous fungus Neurospora crassa.</title>
        <authorList>
            <person name="Galagan J.E."/>
            <person name="Calvo S.E."/>
            <person name="Borkovich K.A."/>
            <person name="Selker E.U."/>
            <person name="Read N.D."/>
            <person name="Jaffe D.B."/>
            <person name="FitzHugh W."/>
            <person name="Ma L.-J."/>
            <person name="Smirnov S."/>
            <person name="Purcell S."/>
            <person name="Rehman B."/>
            <person name="Elkins T."/>
            <person name="Engels R."/>
            <person name="Wang S."/>
            <person name="Nielsen C.B."/>
            <person name="Butler J."/>
            <person name="Endrizzi M."/>
            <person name="Qui D."/>
            <person name="Ianakiev P."/>
            <person name="Bell-Pedersen D."/>
            <person name="Nelson M.A."/>
            <person name="Werner-Washburne M."/>
            <person name="Selitrennikoff C.P."/>
            <person name="Kinsey J.A."/>
            <person name="Braun E.L."/>
            <person name="Zelter A."/>
            <person name="Schulte U."/>
            <person name="Kothe G.O."/>
            <person name="Jedd G."/>
            <person name="Mewes H.-W."/>
            <person name="Staben C."/>
            <person name="Marcotte E."/>
            <person name="Greenberg D."/>
            <person name="Roy A."/>
            <person name="Foley K."/>
            <person name="Naylor J."/>
            <person name="Stange-Thomann N."/>
            <person name="Barrett R."/>
            <person name="Gnerre S."/>
            <person name="Kamal M."/>
            <person name="Kamvysselis M."/>
            <person name="Mauceli E.W."/>
            <person name="Bielke C."/>
            <person name="Rudd S."/>
            <person name="Frishman D."/>
            <person name="Krystofova S."/>
            <person name="Rasmussen C."/>
            <person name="Metzenberg R.L."/>
            <person name="Perkins D.D."/>
            <person name="Kroken S."/>
            <person name="Cogoni C."/>
            <person name="Macino G."/>
            <person name="Catcheside D.E.A."/>
            <person name="Li W."/>
            <person name="Pratt R.J."/>
            <person name="Osmani S.A."/>
            <person name="DeSouza C.P.C."/>
            <person name="Glass N.L."/>
            <person name="Orbach M.J."/>
            <person name="Berglund J.A."/>
            <person name="Voelker R."/>
            <person name="Yarden O."/>
            <person name="Plamann M."/>
            <person name="Seiler S."/>
            <person name="Dunlap J.C."/>
            <person name="Radford A."/>
            <person name="Aramayo R."/>
            <person name="Natvig D.O."/>
            <person name="Alex L.A."/>
            <person name="Mannhaupt G."/>
            <person name="Ebbole D.J."/>
            <person name="Freitag M."/>
            <person name="Paulsen I."/>
            <person name="Sachs M.S."/>
            <person name="Lander E.S."/>
            <person name="Nusbaum C."/>
            <person name="Birren B.W."/>
        </authorList>
    </citation>
    <scope>NUCLEOTIDE SEQUENCE [LARGE SCALE GENOMIC DNA]</scope>
    <source>
        <strain>ATCC 24698 / 74-OR23-1A / CBS 708.71 / DSM 1257 / FGSC 987</strain>
    </source>
</reference>
<sequence length="556" mass="62600">MATESNPALASLPSNVREIIELASQRDGGIPFRAKTAHVHRTWAGTFTSLPELYIQPESVSEIQKVVRLARHARRRVTTTGCGHSPSDITCTSSWLVNLDNFNKVISVDHLTGLVVVQAGIRLYQLSDELDRRGLALPSLGSINEQSIAGAISTGTHGSGIKHGLVGESITELKITLANGETLSCSPEDKPDLFRAALISLGALGIITEVTFKAVPAFSLAWSQAIDSDKRIFEKWEKDLWSQAEFVRIWWFPYMRRAAVWTANVVDPVDLKTGAVKHREPPTSYYDSWLGYYVYHNLLALSRWIPRITPWIEWFVFGMQYGFKNGEVTRIGAVQPSQKAFLLNCLYSQSVNEWAIPLHKGPEALQRLGAWLQNLKPGDPGYVEHGIPYSAEGLWVHSPVEVRASDSTVYTSREANTRPFLDPTQSDGPTLYLNAIMYRPYHREPTYNATERYYLGFEWLMRELGGKPHWAKTFTATQADLARWYGDDFQRWGAVRESVDPEGMFVGPWHRRYLLEPLQRDRLLPLEEIQQTTKKVPARQGGGIEVIGIQNLVAPN</sequence>
<gene>
    <name type="primary">alo-1</name>
    <name type="ORF">NCU03188</name>
</gene>
<dbReference type="EC" id="1.1.3.37"/>
<dbReference type="EMBL" id="CM002236">
    <property type="protein sequence ID" value="EAA36052.1"/>
    <property type="molecule type" value="Genomic_DNA"/>
</dbReference>
<dbReference type="RefSeq" id="XP_965288.1">
    <property type="nucleotide sequence ID" value="XM_960195.2"/>
</dbReference>
<dbReference type="SMR" id="Q7SGY1"/>
<dbReference type="FunCoup" id="Q7SGY1">
    <property type="interactions" value="65"/>
</dbReference>
<dbReference type="STRING" id="367110.Q7SGY1"/>
<dbReference type="PaxDb" id="5141-EFNCRP00000002860"/>
<dbReference type="EnsemblFungi" id="EAA36052">
    <property type="protein sequence ID" value="EAA36052"/>
    <property type="gene ID" value="NCU03188"/>
</dbReference>
<dbReference type="GeneID" id="3881437"/>
<dbReference type="KEGG" id="ncr:NCU03188"/>
<dbReference type="VEuPathDB" id="FungiDB:NCU03188"/>
<dbReference type="HOGENOM" id="CLU_003896_4_1_1"/>
<dbReference type="InParanoid" id="Q7SGY1"/>
<dbReference type="OMA" id="VSWLPRQ"/>
<dbReference type="OrthoDB" id="610608at2759"/>
<dbReference type="UniPathway" id="UPA00771">
    <property type="reaction ID" value="UER00766"/>
</dbReference>
<dbReference type="Proteomes" id="UP000001805">
    <property type="component" value="Chromosome 1, Linkage Group I"/>
</dbReference>
<dbReference type="GO" id="GO:0032473">
    <property type="term" value="C:cytoplasmic side of mitochondrial outer membrane"/>
    <property type="evidence" value="ECO:0007669"/>
    <property type="project" value="EnsemblFungi"/>
</dbReference>
<dbReference type="GO" id="GO:0005739">
    <property type="term" value="C:mitochondrion"/>
    <property type="evidence" value="ECO:0000318"/>
    <property type="project" value="GO_Central"/>
</dbReference>
<dbReference type="GO" id="GO:0003885">
    <property type="term" value="F:D-arabinono-1,4-lactone oxidase activity"/>
    <property type="evidence" value="ECO:0000318"/>
    <property type="project" value="GO_Central"/>
</dbReference>
<dbReference type="GO" id="GO:0071949">
    <property type="term" value="F:FAD binding"/>
    <property type="evidence" value="ECO:0007669"/>
    <property type="project" value="InterPro"/>
</dbReference>
<dbReference type="GO" id="GO:0031489">
    <property type="term" value="F:myosin V binding"/>
    <property type="evidence" value="ECO:0007669"/>
    <property type="project" value="EnsemblFungi"/>
</dbReference>
<dbReference type="GO" id="GO:0034599">
    <property type="term" value="P:cellular response to oxidative stress"/>
    <property type="evidence" value="ECO:0007669"/>
    <property type="project" value="EnsemblFungi"/>
</dbReference>
<dbReference type="GO" id="GO:0070485">
    <property type="term" value="P:dehydro-D-arabinono-1,4-lactone biosynthetic process"/>
    <property type="evidence" value="ECO:0007669"/>
    <property type="project" value="EnsemblFungi"/>
</dbReference>
<dbReference type="GO" id="GO:0000001">
    <property type="term" value="P:mitochondrion inheritance"/>
    <property type="evidence" value="ECO:0007669"/>
    <property type="project" value="EnsemblFungi"/>
</dbReference>
<dbReference type="Gene3D" id="3.30.465.10">
    <property type="match status" value="1"/>
</dbReference>
<dbReference type="Gene3D" id="3.30.70.2520">
    <property type="match status" value="1"/>
</dbReference>
<dbReference type="Gene3D" id="3.30.43.10">
    <property type="entry name" value="Uridine Diphospho-n-acetylenolpyruvylglucosamine Reductase, domain 2"/>
    <property type="match status" value="1"/>
</dbReference>
<dbReference type="InterPro" id="IPR007173">
    <property type="entry name" value="ALO_C"/>
</dbReference>
<dbReference type="InterPro" id="IPR016166">
    <property type="entry name" value="FAD-bd_PCMH"/>
</dbReference>
<dbReference type="InterPro" id="IPR036318">
    <property type="entry name" value="FAD-bd_PCMH-like_sf"/>
</dbReference>
<dbReference type="InterPro" id="IPR016167">
    <property type="entry name" value="FAD-bd_PCMH_sub1"/>
</dbReference>
<dbReference type="InterPro" id="IPR016169">
    <property type="entry name" value="FAD-bd_PCMH_sub2"/>
</dbReference>
<dbReference type="InterPro" id="IPR010031">
    <property type="entry name" value="FAD_lactone_oxidase-like"/>
</dbReference>
<dbReference type="InterPro" id="IPR006094">
    <property type="entry name" value="Oxid_FAD_bind_N"/>
</dbReference>
<dbReference type="InterPro" id="IPR006093">
    <property type="entry name" value="Oxy_OxRdtase_FAD_BS"/>
</dbReference>
<dbReference type="InterPro" id="IPR030654">
    <property type="entry name" value="Sugar_lactone_oxidase"/>
</dbReference>
<dbReference type="NCBIfam" id="TIGR01678">
    <property type="entry name" value="FAD_lactone_ox"/>
    <property type="match status" value="1"/>
</dbReference>
<dbReference type="PANTHER" id="PTHR43762:SF1">
    <property type="entry name" value="D-ARABINONO-1,4-LACTONE OXIDASE"/>
    <property type="match status" value="1"/>
</dbReference>
<dbReference type="PANTHER" id="PTHR43762">
    <property type="entry name" value="L-GULONOLACTONE OXIDASE"/>
    <property type="match status" value="1"/>
</dbReference>
<dbReference type="Pfam" id="PF04030">
    <property type="entry name" value="ALO"/>
    <property type="match status" value="1"/>
</dbReference>
<dbReference type="Pfam" id="PF01565">
    <property type="entry name" value="FAD_binding_4"/>
    <property type="match status" value="1"/>
</dbReference>
<dbReference type="PIRSF" id="PIRSF000136">
    <property type="entry name" value="LGO_GLO"/>
    <property type="match status" value="1"/>
</dbReference>
<dbReference type="SUPFAM" id="SSF56176">
    <property type="entry name" value="FAD-binding/transporter-associated domain-like"/>
    <property type="match status" value="1"/>
</dbReference>
<dbReference type="PROSITE" id="PS51387">
    <property type="entry name" value="FAD_PCMH"/>
    <property type="match status" value="1"/>
</dbReference>
<dbReference type="PROSITE" id="PS00862">
    <property type="entry name" value="OX2_COVAL_FAD"/>
    <property type="match status" value="1"/>
</dbReference>
<comment type="catalytic activity">
    <reaction>
        <text>D-arabinono-1,4-lactone + O2 = dehydro-D-arabinono-1,4-lactone + H2O2 + H(+)</text>
        <dbReference type="Rhea" id="RHEA:23756"/>
        <dbReference type="ChEBI" id="CHEBI:15378"/>
        <dbReference type="ChEBI" id="CHEBI:15379"/>
        <dbReference type="ChEBI" id="CHEBI:16240"/>
        <dbReference type="ChEBI" id="CHEBI:16292"/>
        <dbReference type="ChEBI" id="CHEBI:58277"/>
        <dbReference type="EC" id="1.1.3.37"/>
    </reaction>
</comment>
<comment type="cofactor">
    <cofactor evidence="1">
        <name>FAD</name>
        <dbReference type="ChEBI" id="CHEBI:57692"/>
    </cofactor>
</comment>
<comment type="pathway">
    <text>Cofactor biosynthesis; D-erythroascorbate biosynthesis; dehydro-D-arabinono-1,4-lactone from D-arabinose: step 2/2.</text>
</comment>
<comment type="subcellular location">
    <subcellularLocation>
        <location evidence="1">Mitochondrion membrane</location>
    </subcellularLocation>
    <text evidence="1">Membrane-embedded.</text>
</comment>
<comment type="similarity">
    <text evidence="3">Belongs to the oxygen-dependent FAD-linked oxidoreductase family.</text>
</comment>
<evidence type="ECO:0000250" key="1"/>
<evidence type="ECO:0000255" key="2">
    <source>
        <dbReference type="PROSITE-ProRule" id="PRU00718"/>
    </source>
</evidence>
<evidence type="ECO:0000305" key="3"/>
<accession>Q7SGY1</accession>
<organism>
    <name type="scientific">Neurospora crassa (strain ATCC 24698 / 74-OR23-1A / CBS 708.71 / DSM 1257 / FGSC 987)</name>
    <dbReference type="NCBI Taxonomy" id="367110"/>
    <lineage>
        <taxon>Eukaryota</taxon>
        <taxon>Fungi</taxon>
        <taxon>Dikarya</taxon>
        <taxon>Ascomycota</taxon>
        <taxon>Pezizomycotina</taxon>
        <taxon>Sordariomycetes</taxon>
        <taxon>Sordariomycetidae</taxon>
        <taxon>Sordariales</taxon>
        <taxon>Sordariaceae</taxon>
        <taxon>Neurospora</taxon>
    </lineage>
</organism>
<proteinExistence type="inferred from homology"/>
<protein>
    <recommendedName>
        <fullName>Putative D-arabinono-1,4-lactone oxidase</fullName>
        <shortName>ALO</shortName>
        <ecNumber>1.1.3.37</ecNumber>
    </recommendedName>
    <alternativeName>
        <fullName>L-galactono-gamma-lactone oxidase</fullName>
    </alternativeName>
</protein>
<feature type="chain" id="PRO_0000128168" description="Putative D-arabinono-1,4-lactone oxidase">
    <location>
        <begin position="1"/>
        <end position="556"/>
    </location>
</feature>
<feature type="domain" description="FAD-binding PCMH-type" evidence="2">
    <location>
        <begin position="47"/>
        <end position="217"/>
    </location>
</feature>
<feature type="modified residue" description="Pros-8alpha-FAD histidine" evidence="1">
    <location>
        <position position="84"/>
    </location>
</feature>
<name>ALO_NEUCR</name>